<keyword id="KW-0067">ATP-binding</keyword>
<keyword id="KW-0093">Biotin biosynthesis</keyword>
<keyword id="KW-0963">Cytoplasm</keyword>
<keyword id="KW-0436">Ligase</keyword>
<keyword id="KW-0460">Magnesium</keyword>
<keyword id="KW-0479">Metal-binding</keyword>
<keyword id="KW-0547">Nucleotide-binding</keyword>
<keyword id="KW-1185">Reference proteome</keyword>
<feature type="chain" id="PRO_0000187975" description="ATP-dependent dethiobiotin synthetase BioD">
    <location>
        <begin position="1"/>
        <end position="226"/>
    </location>
</feature>
<feature type="active site" evidence="1">
    <location>
        <position position="37"/>
    </location>
</feature>
<feature type="binding site" evidence="1">
    <location>
        <begin position="12"/>
        <end position="17"/>
    </location>
    <ligand>
        <name>ATP</name>
        <dbReference type="ChEBI" id="CHEBI:30616"/>
    </ligand>
</feature>
<feature type="binding site" evidence="1">
    <location>
        <position position="16"/>
    </location>
    <ligand>
        <name>Mg(2+)</name>
        <dbReference type="ChEBI" id="CHEBI:18420"/>
    </ligand>
</feature>
<feature type="binding site" evidence="1">
    <location>
        <position position="41"/>
    </location>
    <ligand>
        <name>substrate</name>
    </ligand>
</feature>
<feature type="binding site" evidence="1">
    <location>
        <position position="49"/>
    </location>
    <ligand>
        <name>ATP</name>
        <dbReference type="ChEBI" id="CHEBI:30616"/>
    </ligand>
</feature>
<feature type="binding site" evidence="1">
    <location>
        <position position="49"/>
    </location>
    <ligand>
        <name>Mg(2+)</name>
        <dbReference type="ChEBI" id="CHEBI:18420"/>
    </ligand>
</feature>
<feature type="binding site" evidence="1">
    <location>
        <begin position="108"/>
        <end position="111"/>
    </location>
    <ligand>
        <name>ATP</name>
        <dbReference type="ChEBI" id="CHEBI:30616"/>
    </ligand>
</feature>
<feature type="binding site" evidence="1">
    <location>
        <position position="108"/>
    </location>
    <ligand>
        <name>Mg(2+)</name>
        <dbReference type="ChEBI" id="CHEBI:18420"/>
    </ligand>
</feature>
<feature type="binding site" evidence="1">
    <location>
        <begin position="169"/>
        <end position="170"/>
    </location>
    <ligand>
        <name>ATP</name>
        <dbReference type="ChEBI" id="CHEBI:30616"/>
    </ligand>
</feature>
<feature type="binding site" evidence="1">
    <location>
        <begin position="197"/>
        <end position="199"/>
    </location>
    <ligand>
        <name>ATP</name>
        <dbReference type="ChEBI" id="CHEBI:30616"/>
    </ligand>
</feature>
<feature type="sequence conflict" description="In Ref. 1; AAB96958." evidence="2" ref="1">
    <original>A</original>
    <variation>V</variation>
    <location>
        <position position="134"/>
    </location>
</feature>
<evidence type="ECO:0000255" key="1">
    <source>
        <dbReference type="HAMAP-Rule" id="MF_00336"/>
    </source>
</evidence>
<evidence type="ECO:0000305" key="2"/>
<accession>O52587</accession>
<accession>A0A1R3XYQ1</accession>
<accession>X2BIR2</accession>
<proteinExistence type="inferred from homology"/>
<dbReference type="EC" id="6.3.3.3" evidence="1"/>
<dbReference type="EMBL" id="AF041819">
    <property type="protein sequence ID" value="AAB96958.1"/>
    <property type="molecule type" value="Genomic_DNA"/>
</dbReference>
<dbReference type="EMBL" id="LT708304">
    <property type="protein sequence ID" value="SIU00200.1"/>
    <property type="molecule type" value="Genomic_DNA"/>
</dbReference>
<dbReference type="RefSeq" id="NP_855249.1">
    <property type="nucleotide sequence ID" value="NC_002945.3"/>
</dbReference>
<dbReference type="RefSeq" id="WP_003407806.1">
    <property type="nucleotide sequence ID" value="NC_002945.4"/>
</dbReference>
<dbReference type="SMR" id="O52587"/>
<dbReference type="KEGG" id="mbo:BQ2027_MB1597"/>
<dbReference type="PATRIC" id="fig|233413.5.peg.1744"/>
<dbReference type="UniPathway" id="UPA00078">
    <property type="reaction ID" value="UER00161"/>
</dbReference>
<dbReference type="Proteomes" id="UP000001419">
    <property type="component" value="Chromosome"/>
</dbReference>
<dbReference type="GO" id="GO:0005829">
    <property type="term" value="C:cytosol"/>
    <property type="evidence" value="ECO:0007669"/>
    <property type="project" value="TreeGrafter"/>
</dbReference>
<dbReference type="GO" id="GO:0005524">
    <property type="term" value="F:ATP binding"/>
    <property type="evidence" value="ECO:0007669"/>
    <property type="project" value="UniProtKB-UniRule"/>
</dbReference>
<dbReference type="GO" id="GO:0004141">
    <property type="term" value="F:dethiobiotin synthase activity"/>
    <property type="evidence" value="ECO:0007669"/>
    <property type="project" value="UniProtKB-UniRule"/>
</dbReference>
<dbReference type="GO" id="GO:0000287">
    <property type="term" value="F:magnesium ion binding"/>
    <property type="evidence" value="ECO:0007669"/>
    <property type="project" value="UniProtKB-UniRule"/>
</dbReference>
<dbReference type="GO" id="GO:0009102">
    <property type="term" value="P:biotin biosynthetic process"/>
    <property type="evidence" value="ECO:0007669"/>
    <property type="project" value="UniProtKB-UniRule"/>
</dbReference>
<dbReference type="FunFam" id="3.40.50.300:FF:002079">
    <property type="entry name" value="ATP-dependent dethiobiotin synthetase BioD"/>
    <property type="match status" value="1"/>
</dbReference>
<dbReference type="Gene3D" id="3.40.50.300">
    <property type="entry name" value="P-loop containing nucleotide triphosphate hydrolases"/>
    <property type="match status" value="1"/>
</dbReference>
<dbReference type="HAMAP" id="MF_00336">
    <property type="entry name" value="BioD"/>
    <property type="match status" value="1"/>
</dbReference>
<dbReference type="InterPro" id="IPR004472">
    <property type="entry name" value="DTB_synth_BioD"/>
</dbReference>
<dbReference type="InterPro" id="IPR027417">
    <property type="entry name" value="P-loop_NTPase"/>
</dbReference>
<dbReference type="NCBIfam" id="TIGR00347">
    <property type="entry name" value="bioD"/>
    <property type="match status" value="1"/>
</dbReference>
<dbReference type="PANTHER" id="PTHR43210">
    <property type="entry name" value="DETHIOBIOTIN SYNTHETASE"/>
    <property type="match status" value="1"/>
</dbReference>
<dbReference type="PANTHER" id="PTHR43210:SF5">
    <property type="entry name" value="DETHIOBIOTIN SYNTHETASE"/>
    <property type="match status" value="1"/>
</dbReference>
<dbReference type="Pfam" id="PF13500">
    <property type="entry name" value="AAA_26"/>
    <property type="match status" value="1"/>
</dbReference>
<dbReference type="SUPFAM" id="SSF52540">
    <property type="entry name" value="P-loop containing nucleoside triphosphate hydrolases"/>
    <property type="match status" value="1"/>
</dbReference>
<name>BIOD_MYCBO</name>
<protein>
    <recommendedName>
        <fullName evidence="1">ATP-dependent dethiobiotin synthetase BioD</fullName>
        <ecNumber evidence="1">6.3.3.3</ecNumber>
    </recommendedName>
    <alternativeName>
        <fullName evidence="1">DTB synthetase</fullName>
        <shortName evidence="1">DTBS</shortName>
    </alternativeName>
    <alternativeName>
        <fullName evidence="1">Dethiobiotin synthase</fullName>
    </alternativeName>
</protein>
<gene>
    <name evidence="1" type="primary">bioD</name>
    <name type="ordered locus">BQ2027_MB1597</name>
</gene>
<organism>
    <name type="scientific">Mycobacterium bovis (strain ATCC BAA-935 / AF2122/97)</name>
    <dbReference type="NCBI Taxonomy" id="233413"/>
    <lineage>
        <taxon>Bacteria</taxon>
        <taxon>Bacillati</taxon>
        <taxon>Actinomycetota</taxon>
        <taxon>Actinomycetes</taxon>
        <taxon>Mycobacteriales</taxon>
        <taxon>Mycobacteriaceae</taxon>
        <taxon>Mycobacterium</taxon>
        <taxon>Mycobacterium tuberculosis complex</taxon>
    </lineage>
</organism>
<comment type="function">
    <text evidence="1">Catalyzes a mechanistically unusual reaction, the ATP-dependent insertion of CO2 between the N7 and N8 nitrogen atoms of 7,8-diaminopelargonic acid (DAPA, also called 7,8-diammoniononanoate) to form a ureido ring.</text>
</comment>
<comment type="catalytic activity">
    <reaction evidence="1">
        <text>(7R,8S)-7,8-diammoniononanoate + CO2 + ATP = (4R,5S)-dethiobiotin + ADP + phosphate + 3 H(+)</text>
        <dbReference type="Rhea" id="RHEA:15805"/>
        <dbReference type="ChEBI" id="CHEBI:15378"/>
        <dbReference type="ChEBI" id="CHEBI:16526"/>
        <dbReference type="ChEBI" id="CHEBI:30616"/>
        <dbReference type="ChEBI" id="CHEBI:43474"/>
        <dbReference type="ChEBI" id="CHEBI:149469"/>
        <dbReference type="ChEBI" id="CHEBI:149473"/>
        <dbReference type="ChEBI" id="CHEBI:456216"/>
        <dbReference type="EC" id="6.3.3.3"/>
    </reaction>
</comment>
<comment type="cofactor">
    <cofactor evidence="1">
        <name>Mg(2+)</name>
        <dbReference type="ChEBI" id="CHEBI:18420"/>
    </cofactor>
</comment>
<comment type="pathway">
    <text evidence="1">Cofactor biosynthesis; biotin biosynthesis; biotin from 7,8-diaminononanoate: step 1/2.</text>
</comment>
<comment type="subunit">
    <text evidence="1">Homodimer.</text>
</comment>
<comment type="subcellular location">
    <subcellularLocation>
        <location evidence="1">Cytoplasm</location>
    </subcellularLocation>
</comment>
<comment type="similarity">
    <text evidence="1">Belongs to the dethiobiotin synthetase family.</text>
</comment>
<reference key="1">
    <citation type="submission" date="1998-01" db="EMBL/GenBank/DDBJ databases">
        <title>Cloning, sequencing, and identification of Mycobacterium bovis BCG biotin biosynthetic genes by complementing two Mycobacterium smegmatis biotin mutants.</title>
        <authorList>
            <person name="Yu S."/>
            <person name="Jacobs W.R. Jr."/>
        </authorList>
    </citation>
    <scope>NUCLEOTIDE SEQUENCE [GENOMIC DNA]</scope>
    <source>
        <strain>BCG / Pasteur</strain>
    </source>
</reference>
<reference key="2">
    <citation type="journal article" date="2003" name="Proc. Natl. Acad. Sci. U.S.A.">
        <title>The complete genome sequence of Mycobacterium bovis.</title>
        <authorList>
            <person name="Garnier T."/>
            <person name="Eiglmeier K."/>
            <person name="Camus J.-C."/>
            <person name="Medina N."/>
            <person name="Mansoor H."/>
            <person name="Pryor M."/>
            <person name="Duthoy S."/>
            <person name="Grondin S."/>
            <person name="Lacroix C."/>
            <person name="Monsempe C."/>
            <person name="Simon S."/>
            <person name="Harris B."/>
            <person name="Atkin R."/>
            <person name="Doggett J."/>
            <person name="Mayes R."/>
            <person name="Keating L."/>
            <person name="Wheeler P.R."/>
            <person name="Parkhill J."/>
            <person name="Barrell B.G."/>
            <person name="Cole S.T."/>
            <person name="Gordon S.V."/>
            <person name="Hewinson R.G."/>
        </authorList>
    </citation>
    <scope>NUCLEOTIDE SEQUENCE [LARGE SCALE GENOMIC DNA]</scope>
    <source>
        <strain>ATCC BAA-935 / AF2122/97</strain>
    </source>
</reference>
<reference key="3">
    <citation type="journal article" date="2017" name="Genome Announc.">
        <title>Updated reference genome sequence and annotation of Mycobacterium bovis AF2122/97.</title>
        <authorList>
            <person name="Malone K.M."/>
            <person name="Farrell D."/>
            <person name="Stuber T.P."/>
            <person name="Schubert O.T."/>
            <person name="Aebersold R."/>
            <person name="Robbe-Austerman S."/>
            <person name="Gordon S.V."/>
        </authorList>
    </citation>
    <scope>NUCLEOTIDE SEQUENCE [LARGE SCALE GENOMIC DNA]</scope>
    <scope>GENOME REANNOTATION</scope>
    <source>
        <strain>ATCC BAA-935 / AF2122/97</strain>
    </source>
</reference>
<sequence length="226" mass="22426">MTILVVTGTGTGVGKTVVCAALASAARQAGIDVAVCKPVQTGTARGDDDLAEVGRLAGVTQLAGLARYPQPMAPAAAAEHAGMALPARDQIVRLIADLDRPGRLTLVEGAGGLLVELAEPGVTLRDVAVDVAAAALVVVTADLGTLNHTKLTLEALAAQQVSCAGLVIGSWPDPPGLVAASNRSALARIATVRAALPAGAASLDAGDFAAMSAAAFDRNWVAGLVG</sequence>